<accession>B2HZX4</accession>
<name>YIDD_ACIBC</name>
<comment type="function">
    <text evidence="1">Could be involved in insertion of integral membrane proteins into the membrane.</text>
</comment>
<comment type="subcellular location">
    <subcellularLocation>
        <location evidence="1">Cell inner membrane</location>
        <topology evidence="1">Peripheral membrane protein</topology>
        <orientation evidence="1">Cytoplasmic side</orientation>
    </subcellularLocation>
</comment>
<comment type="similarity">
    <text evidence="1">Belongs to the UPF0161 family.</text>
</comment>
<organism>
    <name type="scientific">Acinetobacter baumannii (strain ACICU)</name>
    <dbReference type="NCBI Taxonomy" id="405416"/>
    <lineage>
        <taxon>Bacteria</taxon>
        <taxon>Pseudomonadati</taxon>
        <taxon>Pseudomonadota</taxon>
        <taxon>Gammaproteobacteria</taxon>
        <taxon>Moraxellales</taxon>
        <taxon>Moraxellaceae</taxon>
        <taxon>Acinetobacter</taxon>
        <taxon>Acinetobacter calcoaceticus/baumannii complex</taxon>
    </lineage>
</organism>
<evidence type="ECO:0000255" key="1">
    <source>
        <dbReference type="HAMAP-Rule" id="MF_00386"/>
    </source>
</evidence>
<dbReference type="EMBL" id="CP000863">
    <property type="protein sequence ID" value="ACC55320.1"/>
    <property type="molecule type" value="Genomic_DNA"/>
</dbReference>
<dbReference type="KEGG" id="abc:ACICU_00008"/>
<dbReference type="HOGENOM" id="CLU_144811_2_2_6"/>
<dbReference type="Proteomes" id="UP000008839">
    <property type="component" value="Chromosome"/>
</dbReference>
<dbReference type="GO" id="GO:0005886">
    <property type="term" value="C:plasma membrane"/>
    <property type="evidence" value="ECO:0007669"/>
    <property type="project" value="UniProtKB-SubCell"/>
</dbReference>
<dbReference type="HAMAP" id="MF_00386">
    <property type="entry name" value="UPF0161_YidD"/>
    <property type="match status" value="1"/>
</dbReference>
<dbReference type="InterPro" id="IPR002696">
    <property type="entry name" value="Membr_insert_effic_factor_YidD"/>
</dbReference>
<dbReference type="NCBIfam" id="TIGR00278">
    <property type="entry name" value="membrane protein insertion efficiency factor YidD"/>
    <property type="match status" value="1"/>
</dbReference>
<dbReference type="PANTHER" id="PTHR33383">
    <property type="entry name" value="MEMBRANE PROTEIN INSERTION EFFICIENCY FACTOR-RELATED"/>
    <property type="match status" value="1"/>
</dbReference>
<dbReference type="PANTHER" id="PTHR33383:SF1">
    <property type="entry name" value="MEMBRANE PROTEIN INSERTION EFFICIENCY FACTOR-RELATED"/>
    <property type="match status" value="1"/>
</dbReference>
<dbReference type="Pfam" id="PF01809">
    <property type="entry name" value="YidD"/>
    <property type="match status" value="1"/>
</dbReference>
<dbReference type="SMART" id="SM01234">
    <property type="entry name" value="Haemolytic"/>
    <property type="match status" value="1"/>
</dbReference>
<gene>
    <name type="ordered locus">ACICU_00008</name>
</gene>
<proteinExistence type="inferred from homology"/>
<feature type="chain" id="PRO_1000122608" description="Putative membrane protein insertion efficiency factor">
    <location>
        <begin position="1"/>
        <end position="106"/>
    </location>
</feature>
<sequence length="106" mass="12223">MVRILRWFIRLYQIAISPLLGPRCRYIPTCSQYALEALQTHGAIKGVWLSSKRICRCHPWGGSGYDPVPPKAIRFISFHQIDSQTHHVAVPFRDRLMKQNLSNHLG</sequence>
<reference key="1">
    <citation type="journal article" date="2008" name="Antimicrob. Agents Chemother.">
        <title>Whole-genome pyrosequencing of an epidemic multidrug-resistant Acinetobacter baumannii strain belonging to the European clone II group.</title>
        <authorList>
            <person name="Iacono M."/>
            <person name="Villa L."/>
            <person name="Fortini D."/>
            <person name="Bordoni R."/>
            <person name="Imperi F."/>
            <person name="Bonnal R.J."/>
            <person name="Sicheritz-Ponten T."/>
            <person name="De Bellis G."/>
            <person name="Visca P."/>
            <person name="Cassone A."/>
            <person name="Carattoli A."/>
        </authorList>
    </citation>
    <scope>NUCLEOTIDE SEQUENCE [LARGE SCALE GENOMIC DNA]</scope>
    <source>
        <strain>ACICU</strain>
    </source>
</reference>
<protein>
    <recommendedName>
        <fullName evidence="1">Putative membrane protein insertion efficiency factor</fullName>
    </recommendedName>
</protein>
<keyword id="KW-0997">Cell inner membrane</keyword>
<keyword id="KW-1003">Cell membrane</keyword>
<keyword id="KW-0472">Membrane</keyword>